<proteinExistence type="inferred from homology"/>
<protein>
    <recommendedName>
        <fullName evidence="1">Octanoyltransferase</fullName>
        <ecNumber evidence="1">2.3.1.181</ecNumber>
    </recommendedName>
    <alternativeName>
        <fullName evidence="1">Lipoate-protein ligase B</fullName>
    </alternativeName>
    <alternativeName>
        <fullName evidence="1">Lipoyl/octanoyl transferase</fullName>
    </alternativeName>
    <alternativeName>
        <fullName evidence="1">Octanoyl-[acyl-carrier-protein]-protein N-octanoyltransferase</fullName>
    </alternativeName>
</protein>
<comment type="function">
    <text evidence="1">Catalyzes the transfer of endogenously produced octanoic acid from octanoyl-acyl-carrier-protein onto the lipoyl domains of lipoate-dependent enzymes. Lipoyl-ACP can also act as a substrate although octanoyl-ACP is likely to be the physiological substrate.</text>
</comment>
<comment type="catalytic activity">
    <reaction evidence="1">
        <text>octanoyl-[ACP] + L-lysyl-[protein] = N(6)-octanoyl-L-lysyl-[protein] + holo-[ACP] + H(+)</text>
        <dbReference type="Rhea" id="RHEA:17665"/>
        <dbReference type="Rhea" id="RHEA-COMP:9636"/>
        <dbReference type="Rhea" id="RHEA-COMP:9685"/>
        <dbReference type="Rhea" id="RHEA-COMP:9752"/>
        <dbReference type="Rhea" id="RHEA-COMP:9928"/>
        <dbReference type="ChEBI" id="CHEBI:15378"/>
        <dbReference type="ChEBI" id="CHEBI:29969"/>
        <dbReference type="ChEBI" id="CHEBI:64479"/>
        <dbReference type="ChEBI" id="CHEBI:78463"/>
        <dbReference type="ChEBI" id="CHEBI:78809"/>
        <dbReference type="EC" id="2.3.1.181"/>
    </reaction>
</comment>
<comment type="pathway">
    <text evidence="1">Protein modification; protein lipoylation via endogenous pathway; protein N(6)-(lipoyl)lysine from octanoyl-[acyl-carrier-protein]: step 1/2.</text>
</comment>
<comment type="subcellular location">
    <subcellularLocation>
        <location evidence="1">Cytoplasm</location>
    </subcellularLocation>
</comment>
<comment type="miscellaneous">
    <text evidence="1">In the reaction, the free carboxyl group of octanoic acid is attached via an amide linkage to the epsilon-amino group of a specific lysine residue of lipoyl domains of lipoate-dependent enzymes.</text>
</comment>
<comment type="similarity">
    <text evidence="1">Belongs to the LipB family.</text>
</comment>
<name>LIPB_TROWT</name>
<feature type="chain" id="PRO_0000062888" description="Octanoyltransferase">
    <location>
        <begin position="1"/>
        <end position="235"/>
    </location>
</feature>
<feature type="domain" description="BPL/LPL catalytic" evidence="2">
    <location>
        <begin position="52"/>
        <end position="229"/>
    </location>
</feature>
<feature type="active site" description="Acyl-thioester intermediate" evidence="1">
    <location>
        <position position="190"/>
    </location>
</feature>
<feature type="binding site" evidence="1">
    <location>
        <begin position="89"/>
        <end position="96"/>
    </location>
    <ligand>
        <name>substrate</name>
    </ligand>
</feature>
<feature type="binding site" evidence="1">
    <location>
        <begin position="159"/>
        <end position="161"/>
    </location>
    <ligand>
        <name>substrate</name>
    </ligand>
</feature>
<feature type="binding site" evidence="1">
    <location>
        <begin position="172"/>
        <end position="174"/>
    </location>
    <ligand>
        <name>substrate</name>
    </ligand>
</feature>
<feature type="site" description="Lowers pKa of active site Cys" evidence="1">
    <location>
        <position position="156"/>
    </location>
</feature>
<reference key="1">
    <citation type="journal article" date="2003" name="Genome Res.">
        <title>Tropheryma whipplei twist: a human pathogenic Actinobacteria with a reduced genome.</title>
        <authorList>
            <person name="Raoult D."/>
            <person name="Ogata H."/>
            <person name="Audic S."/>
            <person name="Robert C."/>
            <person name="Suhre K."/>
            <person name="Drancourt M."/>
            <person name="Claverie J.-M."/>
        </authorList>
    </citation>
    <scope>NUCLEOTIDE SEQUENCE [LARGE SCALE GENOMIC DNA]</scope>
    <source>
        <strain>Twist</strain>
    </source>
</reference>
<organism>
    <name type="scientific">Tropheryma whipplei (strain Twist)</name>
    <name type="common">Whipple's bacillus</name>
    <dbReference type="NCBI Taxonomy" id="203267"/>
    <lineage>
        <taxon>Bacteria</taxon>
        <taxon>Bacillati</taxon>
        <taxon>Actinomycetota</taxon>
        <taxon>Actinomycetes</taxon>
        <taxon>Micrococcales</taxon>
        <taxon>Tropherymataceae</taxon>
        <taxon>Tropheryma</taxon>
    </lineage>
</organism>
<sequence>MHSNLPGYWLVYSIRVLAIECIRLAPEYLPFEEGWRMQQELHKKITESQTNKNRQASMIFCEHEPVYTAGARTRSWEMPQNEKVIRVGRGGKITWHGPGQLVGYPILSLGATPDVLRYVRQIEEGLINALQSVGINGFRIAGRSGVWVRNGVSDEKVAAIGVRVQKNVTLHGFALNCSNDLAPFEKIVPCGISDAGVTTISRILKRTITPKEILDSVFNSICSALEYINTCRGNV</sequence>
<dbReference type="EC" id="2.3.1.181" evidence="1"/>
<dbReference type="EMBL" id="AE014184">
    <property type="protein sequence ID" value="AAO44560.1"/>
    <property type="molecule type" value="Genomic_DNA"/>
</dbReference>
<dbReference type="SMR" id="Q83G63"/>
<dbReference type="STRING" id="203267.TWT_463"/>
<dbReference type="KEGG" id="twh:TWT_463"/>
<dbReference type="eggNOG" id="COG0321">
    <property type="taxonomic scope" value="Bacteria"/>
</dbReference>
<dbReference type="HOGENOM" id="CLU_035168_2_1_11"/>
<dbReference type="OrthoDB" id="9787061at2"/>
<dbReference type="UniPathway" id="UPA00538">
    <property type="reaction ID" value="UER00592"/>
</dbReference>
<dbReference type="Proteomes" id="UP000002200">
    <property type="component" value="Chromosome"/>
</dbReference>
<dbReference type="GO" id="GO:0005737">
    <property type="term" value="C:cytoplasm"/>
    <property type="evidence" value="ECO:0007669"/>
    <property type="project" value="UniProtKB-SubCell"/>
</dbReference>
<dbReference type="GO" id="GO:0033819">
    <property type="term" value="F:lipoyl(octanoyl) transferase activity"/>
    <property type="evidence" value="ECO:0007669"/>
    <property type="project" value="UniProtKB-EC"/>
</dbReference>
<dbReference type="GO" id="GO:0036211">
    <property type="term" value="P:protein modification process"/>
    <property type="evidence" value="ECO:0007669"/>
    <property type="project" value="InterPro"/>
</dbReference>
<dbReference type="CDD" id="cd16444">
    <property type="entry name" value="LipB"/>
    <property type="match status" value="1"/>
</dbReference>
<dbReference type="Gene3D" id="3.30.930.10">
    <property type="entry name" value="Bira Bifunctional Protein, Domain 2"/>
    <property type="match status" value="1"/>
</dbReference>
<dbReference type="HAMAP" id="MF_00013">
    <property type="entry name" value="LipB"/>
    <property type="match status" value="1"/>
</dbReference>
<dbReference type="InterPro" id="IPR045864">
    <property type="entry name" value="aa-tRNA-synth_II/BPL/LPL"/>
</dbReference>
<dbReference type="InterPro" id="IPR004143">
    <property type="entry name" value="BPL_LPL_catalytic"/>
</dbReference>
<dbReference type="InterPro" id="IPR000544">
    <property type="entry name" value="Octanoyltransferase"/>
</dbReference>
<dbReference type="InterPro" id="IPR020605">
    <property type="entry name" value="Octanoyltransferase_CS"/>
</dbReference>
<dbReference type="NCBIfam" id="TIGR00214">
    <property type="entry name" value="lipB"/>
    <property type="match status" value="1"/>
</dbReference>
<dbReference type="NCBIfam" id="NF010925">
    <property type="entry name" value="PRK14345.1"/>
    <property type="match status" value="1"/>
</dbReference>
<dbReference type="PANTHER" id="PTHR10993:SF7">
    <property type="entry name" value="LIPOYLTRANSFERASE 2, MITOCHONDRIAL-RELATED"/>
    <property type="match status" value="1"/>
</dbReference>
<dbReference type="PANTHER" id="PTHR10993">
    <property type="entry name" value="OCTANOYLTRANSFERASE"/>
    <property type="match status" value="1"/>
</dbReference>
<dbReference type="Pfam" id="PF21948">
    <property type="entry name" value="LplA-B_cat"/>
    <property type="match status" value="1"/>
</dbReference>
<dbReference type="PIRSF" id="PIRSF016262">
    <property type="entry name" value="LPLase"/>
    <property type="match status" value="1"/>
</dbReference>
<dbReference type="SUPFAM" id="SSF55681">
    <property type="entry name" value="Class II aaRS and biotin synthetases"/>
    <property type="match status" value="1"/>
</dbReference>
<dbReference type="PROSITE" id="PS51733">
    <property type="entry name" value="BPL_LPL_CATALYTIC"/>
    <property type="match status" value="1"/>
</dbReference>
<dbReference type="PROSITE" id="PS01313">
    <property type="entry name" value="LIPB"/>
    <property type="match status" value="1"/>
</dbReference>
<gene>
    <name evidence="1" type="primary">lipB</name>
    <name type="ordered locus">TWT_463</name>
</gene>
<keyword id="KW-0012">Acyltransferase</keyword>
<keyword id="KW-0963">Cytoplasm</keyword>
<keyword id="KW-1185">Reference proteome</keyword>
<keyword id="KW-0808">Transferase</keyword>
<accession>Q83G63</accession>
<evidence type="ECO:0000255" key="1">
    <source>
        <dbReference type="HAMAP-Rule" id="MF_00013"/>
    </source>
</evidence>
<evidence type="ECO:0000255" key="2">
    <source>
        <dbReference type="PROSITE-ProRule" id="PRU01067"/>
    </source>
</evidence>